<geneLocation type="plasmid">
    <name>p15B</name>
</geneLocation>
<gene>
    <name type="primary">T</name>
</gene>
<evidence type="ECO:0000305" key="1"/>
<protein>
    <recommendedName>
        <fullName>Tail fiber assembly protein homolog</fullName>
    </recommendedName>
</protein>
<keyword id="KW-0614">Plasmid</keyword>
<dbReference type="EMBL" id="X62121">
    <property type="protein sequence ID" value="CAA44047.1"/>
    <property type="molecule type" value="Genomic_DNA"/>
</dbReference>
<dbReference type="PIR" id="S18684">
    <property type="entry name" value="S18684"/>
</dbReference>
<dbReference type="RefSeq" id="WP_000367945.1">
    <property type="nucleotide sequence ID" value="NZ_WTSN01000020.1"/>
</dbReference>
<dbReference type="SMR" id="Q47427"/>
<dbReference type="InterPro" id="IPR003458">
    <property type="entry name" value="Phage_T4_Gp38_tail_assem"/>
</dbReference>
<dbReference type="InterPro" id="IPR051220">
    <property type="entry name" value="TFA_Chaperone"/>
</dbReference>
<dbReference type="PANTHER" id="PTHR34413:SF2">
    <property type="entry name" value="PROPHAGE TAIL FIBER ASSEMBLY PROTEIN HOMOLOG TFAE-RELATED"/>
    <property type="match status" value="1"/>
</dbReference>
<dbReference type="PANTHER" id="PTHR34413">
    <property type="entry name" value="PROPHAGE TAIL FIBER ASSEMBLY PROTEIN HOMOLOG TFAE-RELATED-RELATED"/>
    <property type="match status" value="1"/>
</dbReference>
<dbReference type="Pfam" id="PF02413">
    <property type="entry name" value="Caudo_TAP"/>
    <property type="match status" value="1"/>
</dbReference>
<feature type="chain" id="PRO_0000070303" description="Tail fiber assembly protein homolog">
    <location>
        <begin position="1"/>
        <end position="203"/>
    </location>
</feature>
<proteinExistence type="inferred from homology"/>
<accession>Q47427</accession>
<organism>
    <name type="scientific">Escherichia coli</name>
    <dbReference type="NCBI Taxonomy" id="562"/>
    <lineage>
        <taxon>Bacteria</taxon>
        <taxon>Pseudomonadati</taxon>
        <taxon>Pseudomonadota</taxon>
        <taxon>Gammaproteobacteria</taxon>
        <taxon>Enterobacterales</taxon>
        <taxon>Enterobacteriaceae</taxon>
        <taxon>Escherichia</taxon>
    </lineage>
</organism>
<name>TFAB_ECOLX</name>
<reference key="1">
    <citation type="journal article" date="1991" name="Nucleic Acids Res.">
        <title>Gene organization in the multiple DNA inversion region min of plasmid p15B of E.coli 15T-: assemblage of a variable gene.</title>
        <authorList>
            <person name="Sandmeier H."/>
            <person name="Iida S."/>
            <person name="Huebner P."/>
            <person name="Hiestadt-Nauer R."/>
            <person name="Arber W."/>
        </authorList>
    </citation>
    <scope>NUCLEOTIDE SEQUENCE [GENOMIC DNA]</scope>
    <source>
        <strain>15T-</strain>
    </source>
</reference>
<comment type="similarity">
    <text evidence="1">Belongs to the tfa family.</text>
</comment>
<sequence>MDNAILNSELIAIQAGNIIVYNYDGGNREYISASTEYLAVGVGIPANSCLDAPGSHKAGYAILRSEDLSSWEYVPDHRGETVYSIDTGNPEEITVLGDYPENTTTIAPLTPYDKWDGEKWVVDTEAQHSAAVEAAETKRQSLIDTAMDSISLIQLKLRAGRKLTQAETTQLNSVLDYIDELNAMDLTTAPDLNWPEKQLSTAS</sequence>